<name>PYRH_PSEAB</name>
<organism>
    <name type="scientific">Pseudomonas aeruginosa (strain UCBPP-PA14)</name>
    <dbReference type="NCBI Taxonomy" id="208963"/>
    <lineage>
        <taxon>Bacteria</taxon>
        <taxon>Pseudomonadati</taxon>
        <taxon>Pseudomonadota</taxon>
        <taxon>Gammaproteobacteria</taxon>
        <taxon>Pseudomonadales</taxon>
        <taxon>Pseudomonadaceae</taxon>
        <taxon>Pseudomonas</taxon>
    </lineage>
</organism>
<gene>
    <name evidence="1" type="primary">pyrH</name>
    <name type="ordered locus">PA14_17080</name>
</gene>
<reference key="1">
    <citation type="journal article" date="2006" name="Genome Biol.">
        <title>Genomic analysis reveals that Pseudomonas aeruginosa virulence is combinatorial.</title>
        <authorList>
            <person name="Lee D.G."/>
            <person name="Urbach J.M."/>
            <person name="Wu G."/>
            <person name="Liberati N.T."/>
            <person name="Feinbaum R.L."/>
            <person name="Miyata S."/>
            <person name="Diggins L.T."/>
            <person name="He J."/>
            <person name="Saucier M."/>
            <person name="Deziel E."/>
            <person name="Friedman L."/>
            <person name="Li L."/>
            <person name="Grills G."/>
            <person name="Montgomery K."/>
            <person name="Kucherlapati R."/>
            <person name="Rahme L.G."/>
            <person name="Ausubel F.M."/>
        </authorList>
    </citation>
    <scope>NUCLEOTIDE SEQUENCE [LARGE SCALE GENOMIC DNA]</scope>
    <source>
        <strain>UCBPP-PA14</strain>
    </source>
</reference>
<accession>Q02RC6</accession>
<evidence type="ECO:0000255" key="1">
    <source>
        <dbReference type="HAMAP-Rule" id="MF_01220"/>
    </source>
</evidence>
<proteinExistence type="inferred from homology"/>
<feature type="chain" id="PRO_1000053981" description="Uridylate kinase">
    <location>
        <begin position="1"/>
        <end position="245"/>
    </location>
</feature>
<feature type="binding site" evidence="1">
    <location>
        <begin position="18"/>
        <end position="21"/>
    </location>
    <ligand>
        <name>ATP</name>
        <dbReference type="ChEBI" id="CHEBI:30616"/>
    </ligand>
</feature>
<feature type="binding site" evidence="1">
    <location>
        <position position="60"/>
    </location>
    <ligand>
        <name>UMP</name>
        <dbReference type="ChEBI" id="CHEBI:57865"/>
    </ligand>
</feature>
<feature type="binding site" evidence="1">
    <location>
        <position position="61"/>
    </location>
    <ligand>
        <name>ATP</name>
        <dbReference type="ChEBI" id="CHEBI:30616"/>
    </ligand>
</feature>
<feature type="binding site" evidence="1">
    <location>
        <position position="65"/>
    </location>
    <ligand>
        <name>ATP</name>
        <dbReference type="ChEBI" id="CHEBI:30616"/>
    </ligand>
</feature>
<feature type="binding site" evidence="1">
    <location>
        <position position="80"/>
    </location>
    <ligand>
        <name>UMP</name>
        <dbReference type="ChEBI" id="CHEBI:57865"/>
    </ligand>
</feature>
<feature type="binding site" evidence="1">
    <location>
        <begin position="141"/>
        <end position="148"/>
    </location>
    <ligand>
        <name>UMP</name>
        <dbReference type="ChEBI" id="CHEBI:57865"/>
    </ligand>
</feature>
<feature type="binding site" evidence="1">
    <location>
        <position position="168"/>
    </location>
    <ligand>
        <name>ATP</name>
        <dbReference type="ChEBI" id="CHEBI:30616"/>
    </ligand>
</feature>
<feature type="binding site" evidence="1">
    <location>
        <position position="174"/>
    </location>
    <ligand>
        <name>ATP</name>
        <dbReference type="ChEBI" id="CHEBI:30616"/>
    </ligand>
</feature>
<feature type="binding site" evidence="1">
    <location>
        <position position="177"/>
    </location>
    <ligand>
        <name>ATP</name>
        <dbReference type="ChEBI" id="CHEBI:30616"/>
    </ligand>
</feature>
<comment type="function">
    <text evidence="1">Catalyzes the reversible phosphorylation of UMP to UDP.</text>
</comment>
<comment type="catalytic activity">
    <reaction evidence="1">
        <text>UMP + ATP = UDP + ADP</text>
        <dbReference type="Rhea" id="RHEA:24400"/>
        <dbReference type="ChEBI" id="CHEBI:30616"/>
        <dbReference type="ChEBI" id="CHEBI:57865"/>
        <dbReference type="ChEBI" id="CHEBI:58223"/>
        <dbReference type="ChEBI" id="CHEBI:456216"/>
        <dbReference type="EC" id="2.7.4.22"/>
    </reaction>
</comment>
<comment type="activity regulation">
    <text evidence="1">Inhibited by UTP.</text>
</comment>
<comment type="pathway">
    <text evidence="1">Pyrimidine metabolism; CTP biosynthesis via de novo pathway; UDP from UMP (UMPK route): step 1/1.</text>
</comment>
<comment type="subunit">
    <text evidence="1">Homohexamer.</text>
</comment>
<comment type="subcellular location">
    <subcellularLocation>
        <location evidence="1">Cytoplasm</location>
    </subcellularLocation>
</comment>
<comment type="similarity">
    <text evidence="1">Belongs to the UMP kinase family.</text>
</comment>
<keyword id="KW-0067">ATP-binding</keyword>
<keyword id="KW-0963">Cytoplasm</keyword>
<keyword id="KW-0418">Kinase</keyword>
<keyword id="KW-0547">Nucleotide-binding</keyword>
<keyword id="KW-0665">Pyrimidine biosynthesis</keyword>
<keyword id="KW-0808">Transferase</keyword>
<dbReference type="EC" id="2.7.4.22" evidence="1"/>
<dbReference type="EMBL" id="CP000438">
    <property type="protein sequence ID" value="ABJ12887.1"/>
    <property type="molecule type" value="Genomic_DNA"/>
</dbReference>
<dbReference type="RefSeq" id="WP_003092391.1">
    <property type="nucleotide sequence ID" value="NZ_CP034244.1"/>
</dbReference>
<dbReference type="SMR" id="Q02RC6"/>
<dbReference type="KEGG" id="pau:PA14_17080"/>
<dbReference type="PseudoCAP" id="PA14_17080"/>
<dbReference type="HOGENOM" id="CLU_033861_0_0_6"/>
<dbReference type="BioCyc" id="PAER208963:G1G74-1407-MONOMER"/>
<dbReference type="UniPathway" id="UPA00159">
    <property type="reaction ID" value="UER00275"/>
</dbReference>
<dbReference type="Proteomes" id="UP000000653">
    <property type="component" value="Chromosome"/>
</dbReference>
<dbReference type="GO" id="GO:0005829">
    <property type="term" value="C:cytosol"/>
    <property type="evidence" value="ECO:0007669"/>
    <property type="project" value="TreeGrafter"/>
</dbReference>
<dbReference type="GO" id="GO:0005524">
    <property type="term" value="F:ATP binding"/>
    <property type="evidence" value="ECO:0007669"/>
    <property type="project" value="UniProtKB-KW"/>
</dbReference>
<dbReference type="GO" id="GO:0033862">
    <property type="term" value="F:UMP kinase activity"/>
    <property type="evidence" value="ECO:0007669"/>
    <property type="project" value="UniProtKB-EC"/>
</dbReference>
<dbReference type="GO" id="GO:0044210">
    <property type="term" value="P:'de novo' CTP biosynthetic process"/>
    <property type="evidence" value="ECO:0007669"/>
    <property type="project" value="UniProtKB-UniRule"/>
</dbReference>
<dbReference type="GO" id="GO:0006225">
    <property type="term" value="P:UDP biosynthetic process"/>
    <property type="evidence" value="ECO:0007669"/>
    <property type="project" value="TreeGrafter"/>
</dbReference>
<dbReference type="CDD" id="cd04254">
    <property type="entry name" value="AAK_UMPK-PyrH-Ec"/>
    <property type="match status" value="1"/>
</dbReference>
<dbReference type="FunFam" id="3.40.1160.10:FF:000001">
    <property type="entry name" value="Uridylate kinase"/>
    <property type="match status" value="1"/>
</dbReference>
<dbReference type="Gene3D" id="3.40.1160.10">
    <property type="entry name" value="Acetylglutamate kinase-like"/>
    <property type="match status" value="1"/>
</dbReference>
<dbReference type="HAMAP" id="MF_01220_B">
    <property type="entry name" value="PyrH_B"/>
    <property type="match status" value="1"/>
</dbReference>
<dbReference type="InterPro" id="IPR036393">
    <property type="entry name" value="AceGlu_kinase-like_sf"/>
</dbReference>
<dbReference type="InterPro" id="IPR001048">
    <property type="entry name" value="Asp/Glu/Uridylate_kinase"/>
</dbReference>
<dbReference type="InterPro" id="IPR011817">
    <property type="entry name" value="Uridylate_kinase"/>
</dbReference>
<dbReference type="InterPro" id="IPR015963">
    <property type="entry name" value="Uridylate_kinase_bac"/>
</dbReference>
<dbReference type="NCBIfam" id="TIGR02075">
    <property type="entry name" value="pyrH_bact"/>
    <property type="match status" value="1"/>
</dbReference>
<dbReference type="PANTHER" id="PTHR42833">
    <property type="entry name" value="URIDYLATE KINASE"/>
    <property type="match status" value="1"/>
</dbReference>
<dbReference type="PANTHER" id="PTHR42833:SF4">
    <property type="entry name" value="URIDYLATE KINASE PUMPKIN, CHLOROPLASTIC"/>
    <property type="match status" value="1"/>
</dbReference>
<dbReference type="Pfam" id="PF00696">
    <property type="entry name" value="AA_kinase"/>
    <property type="match status" value="1"/>
</dbReference>
<dbReference type="PIRSF" id="PIRSF005650">
    <property type="entry name" value="Uridylate_kin"/>
    <property type="match status" value="1"/>
</dbReference>
<dbReference type="SUPFAM" id="SSF53633">
    <property type="entry name" value="Carbamate kinase-like"/>
    <property type="match status" value="1"/>
</dbReference>
<protein>
    <recommendedName>
        <fullName evidence="1">Uridylate kinase</fullName>
        <shortName evidence="1">UK</shortName>
        <ecNumber evidence="1">2.7.4.22</ecNumber>
    </recommendedName>
    <alternativeName>
        <fullName evidence="1">Uridine monophosphate kinase</fullName>
        <shortName evidence="1">UMP kinase</shortName>
        <shortName evidence="1">UMPK</shortName>
    </alternativeName>
</protein>
<sequence>MAQQLSARQPRYKRILLKLSGEALMGSEEFGIDPKVLDRMALEIGQLVGIGVQVGLVIGGGNLFRGAALSAAGMDRVTGDHMGMLATVMNGLAMRDALERSNIPALVMSAISMVGVTDHYDRRKAMRHLGGGEVVIFSAGTGNPFFTTDSAACLRAIEIDADVVLKATKVDGVYTADPFKDPNAEKFERLTYDEVLDRKLGVMDLTAICLCRDQNMPLRVFNMNKPGALLNIVVGGAEGTLIEEG</sequence>